<organism>
    <name type="scientific">Bacillus cereus (strain ZK / E33L)</name>
    <dbReference type="NCBI Taxonomy" id="288681"/>
    <lineage>
        <taxon>Bacteria</taxon>
        <taxon>Bacillati</taxon>
        <taxon>Bacillota</taxon>
        <taxon>Bacilli</taxon>
        <taxon>Bacillales</taxon>
        <taxon>Bacillaceae</taxon>
        <taxon>Bacillus</taxon>
        <taxon>Bacillus cereus group</taxon>
    </lineage>
</organism>
<accession>Q638L6</accession>
<proteinExistence type="inferred from homology"/>
<name>Y3064_BACCZ</name>
<reference key="1">
    <citation type="journal article" date="2006" name="J. Bacteriol.">
        <title>Pathogenomic sequence analysis of Bacillus cereus and Bacillus thuringiensis isolates closely related to Bacillus anthracis.</title>
        <authorList>
            <person name="Han C.S."/>
            <person name="Xie G."/>
            <person name="Challacombe J.F."/>
            <person name="Altherr M.R."/>
            <person name="Bhotika S.S."/>
            <person name="Bruce D."/>
            <person name="Campbell C.S."/>
            <person name="Campbell M.L."/>
            <person name="Chen J."/>
            <person name="Chertkov O."/>
            <person name="Cleland C."/>
            <person name="Dimitrijevic M."/>
            <person name="Doggett N.A."/>
            <person name="Fawcett J.J."/>
            <person name="Glavina T."/>
            <person name="Goodwin L.A."/>
            <person name="Hill K.K."/>
            <person name="Hitchcock P."/>
            <person name="Jackson P.J."/>
            <person name="Keim P."/>
            <person name="Kewalramani A.R."/>
            <person name="Longmire J."/>
            <person name="Lucas S."/>
            <person name="Malfatti S."/>
            <person name="McMurry K."/>
            <person name="Meincke L.J."/>
            <person name="Misra M."/>
            <person name="Moseman B.L."/>
            <person name="Mundt M."/>
            <person name="Munk A.C."/>
            <person name="Okinaka R.T."/>
            <person name="Parson-Quintana B."/>
            <person name="Reilly L.P."/>
            <person name="Richardson P."/>
            <person name="Robinson D.L."/>
            <person name="Rubin E."/>
            <person name="Saunders E."/>
            <person name="Tapia R."/>
            <person name="Tesmer J.G."/>
            <person name="Thayer N."/>
            <person name="Thompson L.S."/>
            <person name="Tice H."/>
            <person name="Ticknor L.O."/>
            <person name="Wills P.L."/>
            <person name="Brettin T.S."/>
            <person name="Gilna P."/>
        </authorList>
    </citation>
    <scope>NUCLEOTIDE SEQUENCE [LARGE SCALE GENOMIC DNA]</scope>
    <source>
        <strain>ZK / E33L</strain>
    </source>
</reference>
<evidence type="ECO:0000255" key="1">
    <source>
        <dbReference type="HAMAP-Rule" id="MF_01515"/>
    </source>
</evidence>
<sequence length="182" mass="20457">MLQALLIFVLQIIYVPILTIRTILLVKNQTRSAAAVGLLEGAIYIVSLGIVFQDLSNWMNIVAYVIGFSAGLLLGGYIENKLAIGYITYQVSLLDRCNELVDELRHSGFGVTVFEGEGINSIRYRLDIVAKRSREKELLEIINEIAPKAFMSSYEIRSFKGGYLTKAMKKRALMKKKDHHVS</sequence>
<keyword id="KW-1003">Cell membrane</keyword>
<keyword id="KW-0472">Membrane</keyword>
<keyword id="KW-0812">Transmembrane</keyword>
<keyword id="KW-1133">Transmembrane helix</keyword>
<protein>
    <recommendedName>
        <fullName evidence="1">UPF0316 protein BCE33L3064</fullName>
    </recommendedName>
</protein>
<dbReference type="EMBL" id="CP000001">
    <property type="protein sequence ID" value="AAU17198.1"/>
    <property type="molecule type" value="Genomic_DNA"/>
</dbReference>
<dbReference type="RefSeq" id="WP_000938435.1">
    <property type="nucleotide sequence ID" value="NZ_CP009968.1"/>
</dbReference>
<dbReference type="SMR" id="Q638L6"/>
<dbReference type="KEGG" id="bcz:BCE33L3064"/>
<dbReference type="PATRIC" id="fig|288681.22.peg.2378"/>
<dbReference type="Proteomes" id="UP000002612">
    <property type="component" value="Chromosome"/>
</dbReference>
<dbReference type="GO" id="GO:0005886">
    <property type="term" value="C:plasma membrane"/>
    <property type="evidence" value="ECO:0007669"/>
    <property type="project" value="UniProtKB-SubCell"/>
</dbReference>
<dbReference type="CDD" id="cd16381">
    <property type="entry name" value="YitT_C_like_1"/>
    <property type="match status" value="1"/>
</dbReference>
<dbReference type="HAMAP" id="MF_01515">
    <property type="entry name" value="UPF0316"/>
    <property type="match status" value="1"/>
</dbReference>
<dbReference type="InterPro" id="IPR019264">
    <property type="entry name" value="DUF2179"/>
</dbReference>
<dbReference type="InterPro" id="IPR044035">
    <property type="entry name" value="DUF5698"/>
</dbReference>
<dbReference type="InterPro" id="IPR022930">
    <property type="entry name" value="UPF0316"/>
</dbReference>
<dbReference type="NCBIfam" id="NF003193">
    <property type="entry name" value="PRK04164.1-4"/>
    <property type="match status" value="1"/>
</dbReference>
<dbReference type="NCBIfam" id="NF003194">
    <property type="entry name" value="PRK04164.1-5"/>
    <property type="match status" value="1"/>
</dbReference>
<dbReference type="PANTHER" id="PTHR40060">
    <property type="entry name" value="UPF0316 PROTEIN YEBE"/>
    <property type="match status" value="1"/>
</dbReference>
<dbReference type="PANTHER" id="PTHR40060:SF1">
    <property type="entry name" value="UPF0316 PROTEIN YEBE"/>
    <property type="match status" value="1"/>
</dbReference>
<dbReference type="Pfam" id="PF10035">
    <property type="entry name" value="DUF2179"/>
    <property type="match status" value="1"/>
</dbReference>
<dbReference type="Pfam" id="PF18955">
    <property type="entry name" value="DUF5698"/>
    <property type="match status" value="1"/>
</dbReference>
<comment type="subcellular location">
    <subcellularLocation>
        <location evidence="1">Cell membrane</location>
        <topology evidence="1">Multi-pass membrane protein</topology>
    </subcellularLocation>
</comment>
<comment type="similarity">
    <text evidence="1">Belongs to the UPF0316 family.</text>
</comment>
<gene>
    <name type="ordered locus">BCE33L3064</name>
</gene>
<feature type="chain" id="PRO_0000171935" description="UPF0316 protein BCE33L3064">
    <location>
        <begin position="1"/>
        <end position="182"/>
    </location>
</feature>
<feature type="transmembrane region" description="Helical" evidence="1">
    <location>
        <begin position="6"/>
        <end position="26"/>
    </location>
</feature>
<feature type="transmembrane region" description="Helical" evidence="1">
    <location>
        <begin position="32"/>
        <end position="52"/>
    </location>
</feature>
<feature type="transmembrane region" description="Helical" evidence="1">
    <location>
        <begin position="58"/>
        <end position="78"/>
    </location>
</feature>